<comment type="catalytic activity">
    <reaction evidence="1">
        <text>1-(5-phospho-beta-D-ribosyl)-5-[(5-phospho-beta-D-ribosylamino)methylideneamino]imidazole-4-carboxamide = 5-[(5-phospho-1-deoxy-D-ribulos-1-ylimino)methylamino]-1-(5-phospho-beta-D-ribosyl)imidazole-4-carboxamide</text>
        <dbReference type="Rhea" id="RHEA:15469"/>
        <dbReference type="ChEBI" id="CHEBI:58435"/>
        <dbReference type="ChEBI" id="CHEBI:58525"/>
        <dbReference type="EC" id="5.3.1.16"/>
    </reaction>
</comment>
<comment type="pathway">
    <text evidence="1">Amino-acid biosynthesis; L-histidine biosynthesis; L-histidine from 5-phospho-alpha-D-ribose 1-diphosphate: step 4/9.</text>
</comment>
<comment type="subcellular location">
    <subcellularLocation>
        <location evidence="1">Cytoplasm</location>
    </subcellularLocation>
</comment>
<comment type="similarity">
    <text evidence="1">Belongs to the HisA/HisF family.</text>
</comment>
<sequence length="240" mass="24516">MILYPAIDLKDGQAVRLYKGDMDKATVFNDSPAAQARAFQDAGCAWLHLVDLNGAFAGAPVNAAAVEAILAETSVPAQLGGGIRDMATIEMWLGKGIARVILGTVAVEDPELVRAAAKAFPGQVAVGLDARAGRVATRGWAEETDLMVTDLARSFEDAGVAAIIYTDIDRDGAMQGPNVAATAALARATSIPVIASGGVSSLDDLRALKASGAPLDGAISGRALYDGAIDLAEALAVLAD</sequence>
<feature type="chain" id="PRO_1000084096" description="1-(5-phosphoribosyl)-5-[(5-phosphoribosylamino)methylideneamino] imidazole-4-carboxamide isomerase">
    <location>
        <begin position="1"/>
        <end position="240"/>
    </location>
</feature>
<feature type="active site" description="Proton acceptor" evidence="1">
    <location>
        <position position="8"/>
    </location>
</feature>
<feature type="active site" description="Proton donor" evidence="1">
    <location>
        <position position="129"/>
    </location>
</feature>
<protein>
    <recommendedName>
        <fullName evidence="1">1-(5-phosphoribosyl)-5-[(5-phosphoribosylamino)methylideneamino] imidazole-4-carboxamide isomerase</fullName>
        <ecNumber evidence="1">5.3.1.16</ecNumber>
    </recommendedName>
    <alternativeName>
        <fullName evidence="1">Phosphoribosylformimino-5-aminoimidazole carboxamide ribotide isomerase</fullName>
    </alternativeName>
</protein>
<dbReference type="EC" id="5.3.1.16" evidence="1"/>
<dbReference type="EMBL" id="CP000830">
    <property type="protein sequence ID" value="ABV94311.1"/>
    <property type="molecule type" value="Genomic_DNA"/>
</dbReference>
<dbReference type="RefSeq" id="WP_012179239.1">
    <property type="nucleotide sequence ID" value="NC_009952.1"/>
</dbReference>
<dbReference type="SMR" id="A8LHX7"/>
<dbReference type="STRING" id="398580.Dshi_2578"/>
<dbReference type="KEGG" id="dsh:Dshi_2578"/>
<dbReference type="eggNOG" id="COG0106">
    <property type="taxonomic scope" value="Bacteria"/>
</dbReference>
<dbReference type="HOGENOM" id="CLU_048577_1_1_5"/>
<dbReference type="OrthoDB" id="9807749at2"/>
<dbReference type="UniPathway" id="UPA00031">
    <property type="reaction ID" value="UER00009"/>
</dbReference>
<dbReference type="Proteomes" id="UP000006833">
    <property type="component" value="Chromosome"/>
</dbReference>
<dbReference type="GO" id="GO:0005737">
    <property type="term" value="C:cytoplasm"/>
    <property type="evidence" value="ECO:0007669"/>
    <property type="project" value="UniProtKB-SubCell"/>
</dbReference>
<dbReference type="GO" id="GO:0003949">
    <property type="term" value="F:1-(5-phosphoribosyl)-5-[(5-phosphoribosylamino)methylideneamino]imidazole-4-carboxamide isomerase activity"/>
    <property type="evidence" value="ECO:0007669"/>
    <property type="project" value="UniProtKB-UniRule"/>
</dbReference>
<dbReference type="GO" id="GO:0000105">
    <property type="term" value="P:L-histidine biosynthetic process"/>
    <property type="evidence" value="ECO:0007669"/>
    <property type="project" value="UniProtKB-UniRule"/>
</dbReference>
<dbReference type="GO" id="GO:0000162">
    <property type="term" value="P:L-tryptophan biosynthetic process"/>
    <property type="evidence" value="ECO:0007669"/>
    <property type="project" value="TreeGrafter"/>
</dbReference>
<dbReference type="CDD" id="cd04732">
    <property type="entry name" value="HisA"/>
    <property type="match status" value="1"/>
</dbReference>
<dbReference type="FunFam" id="3.20.20.70:FF:000009">
    <property type="entry name" value="1-(5-phosphoribosyl)-5-[(5-phosphoribosylamino)methylideneamino] imidazole-4-carboxamide isomerase"/>
    <property type="match status" value="1"/>
</dbReference>
<dbReference type="Gene3D" id="3.20.20.70">
    <property type="entry name" value="Aldolase class I"/>
    <property type="match status" value="1"/>
</dbReference>
<dbReference type="HAMAP" id="MF_01014">
    <property type="entry name" value="HisA"/>
    <property type="match status" value="1"/>
</dbReference>
<dbReference type="InterPro" id="IPR013785">
    <property type="entry name" value="Aldolase_TIM"/>
</dbReference>
<dbReference type="InterPro" id="IPR006062">
    <property type="entry name" value="His_biosynth"/>
</dbReference>
<dbReference type="InterPro" id="IPR006063">
    <property type="entry name" value="HisA_bact_arch"/>
</dbReference>
<dbReference type="InterPro" id="IPR044524">
    <property type="entry name" value="Isoase_HisA-like"/>
</dbReference>
<dbReference type="InterPro" id="IPR023016">
    <property type="entry name" value="Isoase_HisA-like_bact"/>
</dbReference>
<dbReference type="InterPro" id="IPR011060">
    <property type="entry name" value="RibuloseP-bd_barrel"/>
</dbReference>
<dbReference type="NCBIfam" id="TIGR00007">
    <property type="entry name" value="1-(5-phosphoribosyl)-5-[(5-phosphoribosylamino)methylideneamino]imidazole-4-carboxamide isomerase"/>
    <property type="match status" value="1"/>
</dbReference>
<dbReference type="PANTHER" id="PTHR43090">
    <property type="entry name" value="1-(5-PHOSPHORIBOSYL)-5-[(5-PHOSPHORIBOSYLAMINO)METHYLIDENEAMINO] IMIDAZOLE-4-CARBOXAMIDE ISOMERASE"/>
    <property type="match status" value="1"/>
</dbReference>
<dbReference type="PANTHER" id="PTHR43090:SF2">
    <property type="entry name" value="1-(5-PHOSPHORIBOSYL)-5-[(5-PHOSPHORIBOSYLAMINO)METHYLIDENEAMINO] IMIDAZOLE-4-CARBOXAMIDE ISOMERASE"/>
    <property type="match status" value="1"/>
</dbReference>
<dbReference type="Pfam" id="PF00977">
    <property type="entry name" value="His_biosynth"/>
    <property type="match status" value="1"/>
</dbReference>
<dbReference type="SUPFAM" id="SSF51366">
    <property type="entry name" value="Ribulose-phoshate binding barrel"/>
    <property type="match status" value="1"/>
</dbReference>
<proteinExistence type="inferred from homology"/>
<keyword id="KW-0028">Amino-acid biosynthesis</keyword>
<keyword id="KW-0963">Cytoplasm</keyword>
<keyword id="KW-0368">Histidine biosynthesis</keyword>
<keyword id="KW-0413">Isomerase</keyword>
<keyword id="KW-1185">Reference proteome</keyword>
<evidence type="ECO:0000255" key="1">
    <source>
        <dbReference type="HAMAP-Rule" id="MF_01014"/>
    </source>
</evidence>
<accession>A8LHX7</accession>
<organism>
    <name type="scientific">Dinoroseobacter shibae (strain DSM 16493 / NCIMB 14021 / DFL 12)</name>
    <dbReference type="NCBI Taxonomy" id="398580"/>
    <lineage>
        <taxon>Bacteria</taxon>
        <taxon>Pseudomonadati</taxon>
        <taxon>Pseudomonadota</taxon>
        <taxon>Alphaproteobacteria</taxon>
        <taxon>Rhodobacterales</taxon>
        <taxon>Roseobacteraceae</taxon>
        <taxon>Dinoroseobacter</taxon>
    </lineage>
</organism>
<reference key="1">
    <citation type="journal article" date="2010" name="ISME J.">
        <title>The complete genome sequence of the algal symbiont Dinoroseobacter shibae: a hitchhiker's guide to life in the sea.</title>
        <authorList>
            <person name="Wagner-Dobler I."/>
            <person name="Ballhausen B."/>
            <person name="Berger M."/>
            <person name="Brinkhoff T."/>
            <person name="Buchholz I."/>
            <person name="Bunk B."/>
            <person name="Cypionka H."/>
            <person name="Daniel R."/>
            <person name="Drepper T."/>
            <person name="Gerdts G."/>
            <person name="Hahnke S."/>
            <person name="Han C."/>
            <person name="Jahn D."/>
            <person name="Kalhoefer D."/>
            <person name="Kiss H."/>
            <person name="Klenk H.P."/>
            <person name="Kyrpides N."/>
            <person name="Liebl W."/>
            <person name="Liesegang H."/>
            <person name="Meincke L."/>
            <person name="Pati A."/>
            <person name="Petersen J."/>
            <person name="Piekarski T."/>
            <person name="Pommerenke C."/>
            <person name="Pradella S."/>
            <person name="Pukall R."/>
            <person name="Rabus R."/>
            <person name="Stackebrandt E."/>
            <person name="Thole S."/>
            <person name="Thompson L."/>
            <person name="Tielen P."/>
            <person name="Tomasch J."/>
            <person name="von Jan M."/>
            <person name="Wanphrut N."/>
            <person name="Wichels A."/>
            <person name="Zech H."/>
            <person name="Simon M."/>
        </authorList>
    </citation>
    <scope>NUCLEOTIDE SEQUENCE [LARGE SCALE GENOMIC DNA]</scope>
    <source>
        <strain>DSM 16493 / NCIMB 14021 / DFL 12</strain>
    </source>
</reference>
<name>HIS4_DINSH</name>
<gene>
    <name evidence="1" type="primary">hisA</name>
    <name type="ordered locus">Dshi_2578</name>
</gene>